<dbReference type="EMBL" id="AP009153">
    <property type="protein sequence ID" value="BAH39529.1"/>
    <property type="molecule type" value="Genomic_DNA"/>
</dbReference>
<dbReference type="RefSeq" id="WP_015894298.1">
    <property type="nucleotide sequence ID" value="NC_012489.1"/>
</dbReference>
<dbReference type="SMR" id="C1ABC3"/>
<dbReference type="STRING" id="379066.GAU_2487"/>
<dbReference type="KEGG" id="gau:GAU_2487"/>
<dbReference type="eggNOG" id="COG0712">
    <property type="taxonomic scope" value="Bacteria"/>
</dbReference>
<dbReference type="HOGENOM" id="CLU_085114_3_0_0"/>
<dbReference type="OrthoDB" id="9802471at2"/>
<dbReference type="Proteomes" id="UP000002209">
    <property type="component" value="Chromosome"/>
</dbReference>
<dbReference type="GO" id="GO:0005886">
    <property type="term" value="C:plasma membrane"/>
    <property type="evidence" value="ECO:0007669"/>
    <property type="project" value="UniProtKB-SubCell"/>
</dbReference>
<dbReference type="GO" id="GO:0045259">
    <property type="term" value="C:proton-transporting ATP synthase complex"/>
    <property type="evidence" value="ECO:0007669"/>
    <property type="project" value="UniProtKB-KW"/>
</dbReference>
<dbReference type="GO" id="GO:0046933">
    <property type="term" value="F:proton-transporting ATP synthase activity, rotational mechanism"/>
    <property type="evidence" value="ECO:0007669"/>
    <property type="project" value="UniProtKB-UniRule"/>
</dbReference>
<dbReference type="Gene3D" id="1.10.520.20">
    <property type="entry name" value="N-terminal domain of the delta subunit of the F1F0-ATP synthase"/>
    <property type="match status" value="1"/>
</dbReference>
<dbReference type="HAMAP" id="MF_01416">
    <property type="entry name" value="ATP_synth_delta_bact"/>
    <property type="match status" value="1"/>
</dbReference>
<dbReference type="InterPro" id="IPR026015">
    <property type="entry name" value="ATP_synth_OSCP/delta_N_sf"/>
</dbReference>
<dbReference type="InterPro" id="IPR000711">
    <property type="entry name" value="ATPase_OSCP/dsu"/>
</dbReference>
<dbReference type="NCBIfam" id="TIGR01145">
    <property type="entry name" value="ATP_synt_delta"/>
    <property type="match status" value="1"/>
</dbReference>
<dbReference type="NCBIfam" id="NF004402">
    <property type="entry name" value="PRK05758.2-2"/>
    <property type="match status" value="1"/>
</dbReference>
<dbReference type="PANTHER" id="PTHR11910">
    <property type="entry name" value="ATP SYNTHASE DELTA CHAIN"/>
    <property type="match status" value="1"/>
</dbReference>
<dbReference type="Pfam" id="PF00213">
    <property type="entry name" value="OSCP"/>
    <property type="match status" value="1"/>
</dbReference>
<dbReference type="PRINTS" id="PR00125">
    <property type="entry name" value="ATPASEDELTA"/>
</dbReference>
<dbReference type="SUPFAM" id="SSF47928">
    <property type="entry name" value="N-terminal domain of the delta subunit of the F1F0-ATP synthase"/>
    <property type="match status" value="1"/>
</dbReference>
<protein>
    <recommendedName>
        <fullName evidence="1">ATP synthase subunit delta</fullName>
    </recommendedName>
    <alternativeName>
        <fullName evidence="1">ATP synthase F(1) sector subunit delta</fullName>
    </alternativeName>
    <alternativeName>
        <fullName evidence="1">F-type ATPase subunit delta</fullName>
        <shortName evidence="1">F-ATPase subunit delta</shortName>
    </alternativeName>
</protein>
<name>ATPD_GEMAT</name>
<organism>
    <name type="scientific">Gemmatimonas aurantiaca (strain DSM 14586 / JCM 11422 / NBRC 100505 / T-27)</name>
    <dbReference type="NCBI Taxonomy" id="379066"/>
    <lineage>
        <taxon>Bacteria</taxon>
        <taxon>Pseudomonadati</taxon>
        <taxon>Gemmatimonadota</taxon>
        <taxon>Gemmatimonadia</taxon>
        <taxon>Gemmatimonadales</taxon>
        <taxon>Gemmatimonadaceae</taxon>
        <taxon>Gemmatimonas</taxon>
    </lineage>
</organism>
<keyword id="KW-0066">ATP synthesis</keyword>
<keyword id="KW-0997">Cell inner membrane</keyword>
<keyword id="KW-1003">Cell membrane</keyword>
<keyword id="KW-0139">CF(1)</keyword>
<keyword id="KW-0375">Hydrogen ion transport</keyword>
<keyword id="KW-0406">Ion transport</keyword>
<keyword id="KW-0472">Membrane</keyword>
<keyword id="KW-1185">Reference proteome</keyword>
<keyword id="KW-0813">Transport</keyword>
<evidence type="ECO:0000255" key="1">
    <source>
        <dbReference type="HAMAP-Rule" id="MF_01416"/>
    </source>
</evidence>
<gene>
    <name evidence="1" type="primary">atpH</name>
    <name type="ordered locus">GAU_2487</name>
</gene>
<proteinExistence type="inferred from homology"/>
<comment type="function">
    <text evidence="1">F(1)F(0) ATP synthase produces ATP from ADP in the presence of a proton or sodium gradient. F-type ATPases consist of two structural domains, F(1) containing the extramembraneous catalytic core and F(0) containing the membrane proton channel, linked together by a central stalk and a peripheral stalk. During catalysis, ATP synthesis in the catalytic domain of F(1) is coupled via a rotary mechanism of the central stalk subunits to proton translocation.</text>
</comment>
<comment type="function">
    <text evidence="1">This protein is part of the stalk that links CF(0) to CF(1). It either transmits conformational changes from CF(0) to CF(1) or is implicated in proton conduction.</text>
</comment>
<comment type="subunit">
    <text evidence="1">F-type ATPases have 2 components, F(1) - the catalytic core - and F(0) - the membrane proton channel. F(1) has five subunits: alpha(3), beta(3), gamma(1), delta(1), epsilon(1). F(0) has three main subunits: a(1), b(2) and c(10-14). The alpha and beta chains form an alternating ring which encloses part of the gamma chain. F(1) is attached to F(0) by a central stalk formed by the gamma and epsilon chains, while a peripheral stalk is formed by the delta and b chains.</text>
</comment>
<comment type="subcellular location">
    <subcellularLocation>
        <location evidence="1">Cell inner membrane</location>
        <topology evidence="1">Peripheral membrane protein</topology>
    </subcellularLocation>
</comment>
<comment type="similarity">
    <text evidence="1">Belongs to the ATPase delta chain family.</text>
</comment>
<reference key="1">
    <citation type="submission" date="2006-03" db="EMBL/GenBank/DDBJ databases">
        <title>Complete genome sequence of Gemmatimonas aurantiaca T-27 that represents a novel phylum Gemmatimonadetes.</title>
        <authorList>
            <person name="Takasaki K."/>
            <person name="Ichikawa N."/>
            <person name="Miura H."/>
            <person name="Matsushita S."/>
            <person name="Watanabe Y."/>
            <person name="Oguchi A."/>
            <person name="Ankai A."/>
            <person name="Yashiro I."/>
            <person name="Takahashi M."/>
            <person name="Terui Y."/>
            <person name="Fukui S."/>
            <person name="Yokoyama H."/>
            <person name="Tanikawa S."/>
            <person name="Hanada S."/>
            <person name="Kamagata Y."/>
            <person name="Fujita N."/>
        </authorList>
    </citation>
    <scope>NUCLEOTIDE SEQUENCE [LARGE SCALE GENOMIC DNA]</scope>
    <source>
        <strain>DSM 14586 / JCM 11422 / NBRC 100505 / T-27</strain>
    </source>
</reference>
<feature type="chain" id="PRO_0000382100" description="ATP synthase subunit delta">
    <location>
        <begin position="1"/>
        <end position="185"/>
    </location>
</feature>
<sequence length="185" mass="20098">MAAGVQGESVARNYAEALLVLARKADDAEGWGALLRQVADAINNDVNLSRFLESPRIAAEQKSVVLSKALGDKVPHLFLRFLQQLVKNRRQMLIPAIATEYETLRDAASGIVHARVTVARETGDEEAKMIAERLSKATGKTVVPHFAVDPSILGGVVVRVGDTVMDGSLRRKLGMLRRRMGGTRA</sequence>
<accession>C1ABC3</accession>